<name>THIC_SALA4</name>
<protein>
    <recommendedName>
        <fullName evidence="1">Phosphomethylpyrimidine synthase</fullName>
        <ecNumber evidence="1">4.1.99.17</ecNumber>
    </recommendedName>
    <alternativeName>
        <fullName evidence="1">Hydroxymethylpyrimidine phosphate synthase</fullName>
        <shortName evidence="1">HMP-P synthase</shortName>
        <shortName evidence="1">HMP-phosphate synthase</shortName>
        <shortName evidence="1">HMPP synthase</shortName>
    </alternativeName>
    <alternativeName>
        <fullName evidence="1">Thiamine biosynthesis protein ThiC</fullName>
    </alternativeName>
</protein>
<gene>
    <name evidence="1" type="primary">thiC</name>
    <name type="ordered locus">SeAg_B4407</name>
</gene>
<organism>
    <name type="scientific">Salmonella agona (strain SL483)</name>
    <dbReference type="NCBI Taxonomy" id="454166"/>
    <lineage>
        <taxon>Bacteria</taxon>
        <taxon>Pseudomonadati</taxon>
        <taxon>Pseudomonadota</taxon>
        <taxon>Gammaproteobacteria</taxon>
        <taxon>Enterobacterales</taxon>
        <taxon>Enterobacteriaceae</taxon>
        <taxon>Salmonella</taxon>
    </lineage>
</organism>
<reference key="1">
    <citation type="journal article" date="2011" name="J. Bacteriol.">
        <title>Comparative genomics of 28 Salmonella enterica isolates: evidence for CRISPR-mediated adaptive sublineage evolution.</title>
        <authorList>
            <person name="Fricke W.F."/>
            <person name="Mammel M.K."/>
            <person name="McDermott P.F."/>
            <person name="Tartera C."/>
            <person name="White D.G."/>
            <person name="Leclerc J.E."/>
            <person name="Ravel J."/>
            <person name="Cebula T.A."/>
        </authorList>
    </citation>
    <scope>NUCLEOTIDE SEQUENCE [LARGE SCALE GENOMIC DNA]</scope>
    <source>
        <strain>SL483</strain>
    </source>
</reference>
<proteinExistence type="inferred from homology"/>
<feature type="chain" id="PRO_1000093227" description="Phosphomethylpyrimidine synthase">
    <location>
        <begin position="1"/>
        <end position="631"/>
    </location>
</feature>
<feature type="binding site" evidence="1">
    <location>
        <position position="239"/>
    </location>
    <ligand>
        <name>substrate</name>
    </ligand>
</feature>
<feature type="binding site" evidence="1">
    <location>
        <position position="268"/>
    </location>
    <ligand>
        <name>substrate</name>
    </ligand>
</feature>
<feature type="binding site" evidence="1">
    <location>
        <position position="297"/>
    </location>
    <ligand>
        <name>substrate</name>
    </ligand>
</feature>
<feature type="binding site" evidence="1">
    <location>
        <position position="333"/>
    </location>
    <ligand>
        <name>substrate</name>
    </ligand>
</feature>
<feature type="binding site" evidence="1">
    <location>
        <begin position="353"/>
        <end position="355"/>
    </location>
    <ligand>
        <name>substrate</name>
    </ligand>
</feature>
<feature type="binding site" evidence="1">
    <location>
        <begin position="394"/>
        <end position="397"/>
    </location>
    <ligand>
        <name>substrate</name>
    </ligand>
</feature>
<feature type="binding site" evidence="1">
    <location>
        <position position="433"/>
    </location>
    <ligand>
        <name>substrate</name>
    </ligand>
</feature>
<feature type="binding site" evidence="1">
    <location>
        <position position="437"/>
    </location>
    <ligand>
        <name>Zn(2+)</name>
        <dbReference type="ChEBI" id="CHEBI:29105"/>
    </ligand>
</feature>
<feature type="binding site" evidence="1">
    <location>
        <position position="460"/>
    </location>
    <ligand>
        <name>substrate</name>
    </ligand>
</feature>
<feature type="binding site" evidence="1">
    <location>
        <position position="501"/>
    </location>
    <ligand>
        <name>Zn(2+)</name>
        <dbReference type="ChEBI" id="CHEBI:29105"/>
    </ligand>
</feature>
<feature type="binding site" evidence="1">
    <location>
        <position position="581"/>
    </location>
    <ligand>
        <name>[4Fe-4S] cluster</name>
        <dbReference type="ChEBI" id="CHEBI:49883"/>
        <note>4Fe-4S-S-AdoMet</note>
    </ligand>
</feature>
<feature type="binding site" evidence="1">
    <location>
        <position position="584"/>
    </location>
    <ligand>
        <name>[4Fe-4S] cluster</name>
        <dbReference type="ChEBI" id="CHEBI:49883"/>
        <note>4Fe-4S-S-AdoMet</note>
    </ligand>
</feature>
<feature type="binding site" evidence="1">
    <location>
        <position position="589"/>
    </location>
    <ligand>
        <name>[4Fe-4S] cluster</name>
        <dbReference type="ChEBI" id="CHEBI:49883"/>
        <note>4Fe-4S-S-AdoMet</note>
    </ligand>
</feature>
<keyword id="KW-0004">4Fe-4S</keyword>
<keyword id="KW-0408">Iron</keyword>
<keyword id="KW-0411">Iron-sulfur</keyword>
<keyword id="KW-0456">Lyase</keyword>
<keyword id="KW-0479">Metal-binding</keyword>
<keyword id="KW-0949">S-adenosyl-L-methionine</keyword>
<keyword id="KW-0784">Thiamine biosynthesis</keyword>
<keyword id="KW-0862">Zinc</keyword>
<sequence>MSTTTLTRREQRAKAQHFIDTLEGTAFPNSKRIYVTGSQHDIRVPMREIQLSPTLIGGSKDNPQFEENEAVPVYDTSGPYGDPEVAINVQQGLAKLRQPWIEARADVETLADRSSAYTRERLTDEGLDALRFTGLLTPKRAKAGHRVTQLHYARQGIVTPEMEFIAIRENMGRERIRSEVLRHQHPGMSFGARLPENITPEFVRDEVAAGRAIIPANINHPESEPMIIGRNFLVKVNANIGNSAVTSSIEEEVEKLVWSTRWGADTVMDLSTGRYIHETREWILRNSPVPIGTVPIYQALEKVNGIAEDLTWEAFRDTLLEQAEQGVDYFTIHAGVLLRYVPMTAKRLTGIVSRGGSIMAKWCLSHHKENFLFEHFREICEICAAYDVSLSLGDGLRPGSIQDANDEAQFSELHTLGELTKIAWEYDVQVMIEGPGHVPMHMIQRNMTEELESCHEAPFYTLGPLTTDIAPGYDHFTSGIGAAMIGWFGCAMLCYVTPKEHLGLPNKEDVKQGLITYKIAAHAADLAKGHPGAQIRDNAMSKARFEFRWEDQFNLALDPFTARAYHDETLPQESGKVAHFCSMCGPKFCSMKISQEVRDYAAAQTIEVGMANMSENFRAKGGEIYLKREEV</sequence>
<evidence type="ECO:0000255" key="1">
    <source>
        <dbReference type="HAMAP-Rule" id="MF_00089"/>
    </source>
</evidence>
<comment type="function">
    <text evidence="1">Catalyzes the synthesis of the hydroxymethylpyrimidine phosphate (HMP-P) moiety of thiamine from aminoimidazole ribotide (AIR) in a radical S-adenosyl-L-methionine (SAM)-dependent reaction.</text>
</comment>
<comment type="catalytic activity">
    <reaction evidence="1">
        <text>5-amino-1-(5-phospho-beta-D-ribosyl)imidazole + S-adenosyl-L-methionine = 4-amino-2-methyl-5-(phosphooxymethyl)pyrimidine + CO + 5'-deoxyadenosine + formate + L-methionine + 3 H(+)</text>
        <dbReference type="Rhea" id="RHEA:24840"/>
        <dbReference type="ChEBI" id="CHEBI:15378"/>
        <dbReference type="ChEBI" id="CHEBI:15740"/>
        <dbReference type="ChEBI" id="CHEBI:17245"/>
        <dbReference type="ChEBI" id="CHEBI:17319"/>
        <dbReference type="ChEBI" id="CHEBI:57844"/>
        <dbReference type="ChEBI" id="CHEBI:58354"/>
        <dbReference type="ChEBI" id="CHEBI:59789"/>
        <dbReference type="ChEBI" id="CHEBI:137981"/>
        <dbReference type="EC" id="4.1.99.17"/>
    </reaction>
</comment>
<comment type="cofactor">
    <cofactor evidence="1">
        <name>[4Fe-4S] cluster</name>
        <dbReference type="ChEBI" id="CHEBI:49883"/>
    </cofactor>
    <text evidence="1">Binds 1 [4Fe-4S] cluster per subunit. The cluster is coordinated with 3 cysteines and an exchangeable S-adenosyl-L-methionine.</text>
</comment>
<comment type="pathway">
    <text evidence="1">Cofactor biosynthesis; thiamine diphosphate biosynthesis.</text>
</comment>
<comment type="subunit">
    <text evidence="1">Homodimer.</text>
</comment>
<comment type="similarity">
    <text evidence="1">Belongs to the ThiC family.</text>
</comment>
<dbReference type="EC" id="4.1.99.17" evidence="1"/>
<dbReference type="EMBL" id="CP001138">
    <property type="protein sequence ID" value="ACH51691.1"/>
    <property type="molecule type" value="Genomic_DNA"/>
</dbReference>
<dbReference type="RefSeq" id="WP_000108427.1">
    <property type="nucleotide sequence ID" value="NC_011149.1"/>
</dbReference>
<dbReference type="SMR" id="B5F1H7"/>
<dbReference type="KEGG" id="sea:SeAg_B4407"/>
<dbReference type="HOGENOM" id="CLU_013181_2_1_6"/>
<dbReference type="UniPathway" id="UPA00060"/>
<dbReference type="Proteomes" id="UP000008819">
    <property type="component" value="Chromosome"/>
</dbReference>
<dbReference type="GO" id="GO:0005829">
    <property type="term" value="C:cytosol"/>
    <property type="evidence" value="ECO:0007669"/>
    <property type="project" value="TreeGrafter"/>
</dbReference>
<dbReference type="GO" id="GO:0051539">
    <property type="term" value="F:4 iron, 4 sulfur cluster binding"/>
    <property type="evidence" value="ECO:0007669"/>
    <property type="project" value="UniProtKB-KW"/>
</dbReference>
<dbReference type="GO" id="GO:0016830">
    <property type="term" value="F:carbon-carbon lyase activity"/>
    <property type="evidence" value="ECO:0007669"/>
    <property type="project" value="InterPro"/>
</dbReference>
<dbReference type="GO" id="GO:0008270">
    <property type="term" value="F:zinc ion binding"/>
    <property type="evidence" value="ECO:0007669"/>
    <property type="project" value="UniProtKB-UniRule"/>
</dbReference>
<dbReference type="GO" id="GO:0009228">
    <property type="term" value="P:thiamine biosynthetic process"/>
    <property type="evidence" value="ECO:0007669"/>
    <property type="project" value="UniProtKB-KW"/>
</dbReference>
<dbReference type="GO" id="GO:0009229">
    <property type="term" value="P:thiamine diphosphate biosynthetic process"/>
    <property type="evidence" value="ECO:0007669"/>
    <property type="project" value="UniProtKB-UniRule"/>
</dbReference>
<dbReference type="FunFam" id="3.20.20.540:FF:000001">
    <property type="entry name" value="Phosphomethylpyrimidine synthase"/>
    <property type="match status" value="1"/>
</dbReference>
<dbReference type="Gene3D" id="6.10.250.620">
    <property type="match status" value="1"/>
</dbReference>
<dbReference type="Gene3D" id="3.20.20.540">
    <property type="entry name" value="Radical SAM ThiC family, central domain"/>
    <property type="match status" value="1"/>
</dbReference>
<dbReference type="HAMAP" id="MF_00089">
    <property type="entry name" value="ThiC"/>
    <property type="match status" value="1"/>
</dbReference>
<dbReference type="InterPro" id="IPR037509">
    <property type="entry name" value="ThiC"/>
</dbReference>
<dbReference type="InterPro" id="IPR025747">
    <property type="entry name" value="ThiC-associated_dom"/>
</dbReference>
<dbReference type="InterPro" id="IPR038521">
    <property type="entry name" value="ThiC/Bza_core_dom"/>
</dbReference>
<dbReference type="InterPro" id="IPR002817">
    <property type="entry name" value="ThiC/BzaA/B"/>
</dbReference>
<dbReference type="NCBIfam" id="NF006763">
    <property type="entry name" value="PRK09284.1"/>
    <property type="match status" value="1"/>
</dbReference>
<dbReference type="NCBIfam" id="NF009895">
    <property type="entry name" value="PRK13352.1"/>
    <property type="match status" value="1"/>
</dbReference>
<dbReference type="NCBIfam" id="TIGR00190">
    <property type="entry name" value="thiC"/>
    <property type="match status" value="1"/>
</dbReference>
<dbReference type="PANTHER" id="PTHR30557:SF1">
    <property type="entry name" value="PHOSPHOMETHYLPYRIMIDINE SYNTHASE, CHLOROPLASTIC"/>
    <property type="match status" value="1"/>
</dbReference>
<dbReference type="PANTHER" id="PTHR30557">
    <property type="entry name" value="THIAMINE BIOSYNTHESIS PROTEIN THIC"/>
    <property type="match status" value="1"/>
</dbReference>
<dbReference type="Pfam" id="PF13667">
    <property type="entry name" value="ThiC-associated"/>
    <property type="match status" value="1"/>
</dbReference>
<dbReference type="Pfam" id="PF01964">
    <property type="entry name" value="ThiC_Rad_SAM"/>
    <property type="match status" value="1"/>
</dbReference>
<dbReference type="SFLD" id="SFLDF00407">
    <property type="entry name" value="phosphomethylpyrimidine_syntha"/>
    <property type="match status" value="1"/>
</dbReference>
<dbReference type="SFLD" id="SFLDG01114">
    <property type="entry name" value="phosphomethylpyrimidine_syntha"/>
    <property type="match status" value="1"/>
</dbReference>
<dbReference type="SFLD" id="SFLDS00113">
    <property type="entry name" value="Radical_SAM_Phosphomethylpyrim"/>
    <property type="match status" value="1"/>
</dbReference>
<accession>B5F1H7</accession>